<dbReference type="EMBL" id="CP000237">
    <property type="protein sequence ID" value="ABD46467.1"/>
    <property type="molecule type" value="Genomic_DNA"/>
</dbReference>
<dbReference type="RefSeq" id="WP_011451674.1">
    <property type="nucleotide sequence ID" value="NC_007798.1"/>
</dbReference>
<dbReference type="SMR" id="Q2GEC8"/>
<dbReference type="STRING" id="222891.NSE_0277"/>
<dbReference type="KEGG" id="nse:NSE_0277"/>
<dbReference type="eggNOG" id="COG0198">
    <property type="taxonomic scope" value="Bacteria"/>
</dbReference>
<dbReference type="HOGENOM" id="CLU_2260767_0_0_5"/>
<dbReference type="OrthoDB" id="9807419at2"/>
<dbReference type="Proteomes" id="UP000001942">
    <property type="component" value="Chromosome"/>
</dbReference>
<dbReference type="GO" id="GO:1990904">
    <property type="term" value="C:ribonucleoprotein complex"/>
    <property type="evidence" value="ECO:0007669"/>
    <property type="project" value="UniProtKB-KW"/>
</dbReference>
<dbReference type="GO" id="GO:0005840">
    <property type="term" value="C:ribosome"/>
    <property type="evidence" value="ECO:0007669"/>
    <property type="project" value="UniProtKB-KW"/>
</dbReference>
<dbReference type="GO" id="GO:0019843">
    <property type="term" value="F:rRNA binding"/>
    <property type="evidence" value="ECO:0007669"/>
    <property type="project" value="UniProtKB-UniRule"/>
</dbReference>
<dbReference type="GO" id="GO:0003735">
    <property type="term" value="F:structural constituent of ribosome"/>
    <property type="evidence" value="ECO:0007669"/>
    <property type="project" value="InterPro"/>
</dbReference>
<dbReference type="GO" id="GO:0006412">
    <property type="term" value="P:translation"/>
    <property type="evidence" value="ECO:0007669"/>
    <property type="project" value="UniProtKB-UniRule"/>
</dbReference>
<dbReference type="CDD" id="cd06089">
    <property type="entry name" value="KOW_RPL26"/>
    <property type="match status" value="1"/>
</dbReference>
<dbReference type="Gene3D" id="2.30.30.30">
    <property type="match status" value="1"/>
</dbReference>
<dbReference type="HAMAP" id="MF_01326_B">
    <property type="entry name" value="Ribosomal_uL24_B"/>
    <property type="match status" value="1"/>
</dbReference>
<dbReference type="InterPro" id="IPR014722">
    <property type="entry name" value="Rib_uL2_dom2"/>
</dbReference>
<dbReference type="InterPro" id="IPR003256">
    <property type="entry name" value="Ribosomal_uL24"/>
</dbReference>
<dbReference type="InterPro" id="IPR005825">
    <property type="entry name" value="Ribosomal_uL24_CS"/>
</dbReference>
<dbReference type="InterPro" id="IPR041988">
    <property type="entry name" value="Ribosomal_uL24_KOW"/>
</dbReference>
<dbReference type="InterPro" id="IPR008991">
    <property type="entry name" value="Translation_prot_SH3-like_sf"/>
</dbReference>
<dbReference type="NCBIfam" id="TIGR01079">
    <property type="entry name" value="rplX_bact"/>
    <property type="match status" value="1"/>
</dbReference>
<dbReference type="PANTHER" id="PTHR12903">
    <property type="entry name" value="MITOCHONDRIAL RIBOSOMAL PROTEIN L24"/>
    <property type="match status" value="1"/>
</dbReference>
<dbReference type="Pfam" id="PF17136">
    <property type="entry name" value="ribosomal_L24"/>
    <property type="match status" value="1"/>
</dbReference>
<dbReference type="SUPFAM" id="SSF50104">
    <property type="entry name" value="Translation proteins SH3-like domain"/>
    <property type="match status" value="1"/>
</dbReference>
<dbReference type="PROSITE" id="PS01108">
    <property type="entry name" value="RIBOSOMAL_L24"/>
    <property type="match status" value="1"/>
</dbReference>
<name>RL24_NEOSM</name>
<gene>
    <name evidence="1" type="primary">rplX</name>
    <name type="ordered locus">NSE_0277</name>
</gene>
<proteinExistence type="inferred from homology"/>
<comment type="function">
    <text evidence="1">One of two assembly initiator proteins, it binds directly to the 5'-end of the 23S rRNA, where it nucleates assembly of the 50S subunit.</text>
</comment>
<comment type="function">
    <text evidence="1">One of the proteins that surrounds the polypeptide exit tunnel on the outside of the subunit.</text>
</comment>
<comment type="subunit">
    <text evidence="1">Part of the 50S ribosomal subunit.</text>
</comment>
<comment type="similarity">
    <text evidence="1">Belongs to the universal ribosomal protein uL24 family.</text>
</comment>
<sequence>MKRIVSGDQVKVISGNEAGKVGVVRKVLYSSVGRRKEVYVIVSDVNVRRFVKKTQAGKKFDAKSYPIAVSNVALLAGDGFVSKVGFKLKDGTKKRIFKRTAEFV</sequence>
<reference key="1">
    <citation type="journal article" date="2006" name="PLoS Genet.">
        <title>Comparative genomics of emerging human ehrlichiosis agents.</title>
        <authorList>
            <person name="Dunning Hotopp J.C."/>
            <person name="Lin M."/>
            <person name="Madupu R."/>
            <person name="Crabtree J."/>
            <person name="Angiuoli S.V."/>
            <person name="Eisen J.A."/>
            <person name="Seshadri R."/>
            <person name="Ren Q."/>
            <person name="Wu M."/>
            <person name="Utterback T.R."/>
            <person name="Smith S."/>
            <person name="Lewis M."/>
            <person name="Khouri H."/>
            <person name="Zhang C."/>
            <person name="Niu H."/>
            <person name="Lin Q."/>
            <person name="Ohashi N."/>
            <person name="Zhi N."/>
            <person name="Nelson W.C."/>
            <person name="Brinkac L.M."/>
            <person name="Dodson R.J."/>
            <person name="Rosovitz M.J."/>
            <person name="Sundaram J.P."/>
            <person name="Daugherty S.C."/>
            <person name="Davidsen T."/>
            <person name="Durkin A.S."/>
            <person name="Gwinn M.L."/>
            <person name="Haft D.H."/>
            <person name="Selengut J.D."/>
            <person name="Sullivan S.A."/>
            <person name="Zafar N."/>
            <person name="Zhou L."/>
            <person name="Benahmed F."/>
            <person name="Forberger H."/>
            <person name="Halpin R."/>
            <person name="Mulligan S."/>
            <person name="Robinson J."/>
            <person name="White O."/>
            <person name="Rikihisa Y."/>
            <person name="Tettelin H."/>
        </authorList>
    </citation>
    <scope>NUCLEOTIDE SEQUENCE [LARGE SCALE GENOMIC DNA]</scope>
    <source>
        <strain>ATCC VR-367 / Miyayama</strain>
    </source>
</reference>
<accession>Q2GEC8</accession>
<keyword id="KW-0687">Ribonucleoprotein</keyword>
<keyword id="KW-0689">Ribosomal protein</keyword>
<keyword id="KW-0694">RNA-binding</keyword>
<keyword id="KW-0699">rRNA-binding</keyword>
<organism>
    <name type="scientific">Neorickettsia sennetsu (strain ATCC VR-367 / Miyayama)</name>
    <name type="common">Ehrlichia sennetsu</name>
    <dbReference type="NCBI Taxonomy" id="222891"/>
    <lineage>
        <taxon>Bacteria</taxon>
        <taxon>Pseudomonadati</taxon>
        <taxon>Pseudomonadota</taxon>
        <taxon>Alphaproteobacteria</taxon>
        <taxon>Rickettsiales</taxon>
        <taxon>Anaplasmataceae</taxon>
        <taxon>Neorickettsia</taxon>
    </lineage>
</organism>
<evidence type="ECO:0000255" key="1">
    <source>
        <dbReference type="HAMAP-Rule" id="MF_01326"/>
    </source>
</evidence>
<evidence type="ECO:0000305" key="2"/>
<protein>
    <recommendedName>
        <fullName evidence="1">Large ribosomal subunit protein uL24</fullName>
    </recommendedName>
    <alternativeName>
        <fullName evidence="2">50S ribosomal protein L24</fullName>
    </alternativeName>
</protein>
<feature type="chain" id="PRO_0000355698" description="Large ribosomal subunit protein uL24">
    <location>
        <begin position="1"/>
        <end position="104"/>
    </location>
</feature>